<gene>
    <name evidence="1" type="primary">purA</name>
    <name type="ordered locus">PsycPRwf_1810</name>
</gene>
<dbReference type="EC" id="6.3.4.4" evidence="1"/>
<dbReference type="EMBL" id="CP000713">
    <property type="protein sequence ID" value="ABQ94750.1"/>
    <property type="molecule type" value="Genomic_DNA"/>
</dbReference>
<dbReference type="SMR" id="A5WGF9"/>
<dbReference type="STRING" id="349106.PsycPRwf_1810"/>
<dbReference type="KEGG" id="prw:PsycPRwf_1810"/>
<dbReference type="eggNOG" id="COG0104">
    <property type="taxonomic scope" value="Bacteria"/>
</dbReference>
<dbReference type="HOGENOM" id="CLU_029848_0_0_6"/>
<dbReference type="UniPathway" id="UPA00075">
    <property type="reaction ID" value="UER00335"/>
</dbReference>
<dbReference type="GO" id="GO:0005737">
    <property type="term" value="C:cytoplasm"/>
    <property type="evidence" value="ECO:0007669"/>
    <property type="project" value="UniProtKB-SubCell"/>
</dbReference>
<dbReference type="GO" id="GO:0004019">
    <property type="term" value="F:adenylosuccinate synthase activity"/>
    <property type="evidence" value="ECO:0007669"/>
    <property type="project" value="UniProtKB-UniRule"/>
</dbReference>
<dbReference type="GO" id="GO:0005525">
    <property type="term" value="F:GTP binding"/>
    <property type="evidence" value="ECO:0007669"/>
    <property type="project" value="UniProtKB-UniRule"/>
</dbReference>
<dbReference type="GO" id="GO:0000287">
    <property type="term" value="F:magnesium ion binding"/>
    <property type="evidence" value="ECO:0007669"/>
    <property type="project" value="UniProtKB-UniRule"/>
</dbReference>
<dbReference type="GO" id="GO:0044208">
    <property type="term" value="P:'de novo' AMP biosynthetic process"/>
    <property type="evidence" value="ECO:0007669"/>
    <property type="project" value="UniProtKB-UniRule"/>
</dbReference>
<dbReference type="GO" id="GO:0046040">
    <property type="term" value="P:IMP metabolic process"/>
    <property type="evidence" value="ECO:0007669"/>
    <property type="project" value="TreeGrafter"/>
</dbReference>
<dbReference type="CDD" id="cd03108">
    <property type="entry name" value="AdSS"/>
    <property type="match status" value="1"/>
</dbReference>
<dbReference type="FunFam" id="1.10.300.10:FF:000001">
    <property type="entry name" value="Adenylosuccinate synthetase"/>
    <property type="match status" value="1"/>
</dbReference>
<dbReference type="FunFam" id="3.90.170.10:FF:000001">
    <property type="entry name" value="Adenylosuccinate synthetase"/>
    <property type="match status" value="1"/>
</dbReference>
<dbReference type="Gene3D" id="3.40.440.10">
    <property type="entry name" value="Adenylosuccinate Synthetase, subunit A, domain 1"/>
    <property type="match status" value="1"/>
</dbReference>
<dbReference type="Gene3D" id="1.10.300.10">
    <property type="entry name" value="Adenylosuccinate Synthetase, subunit A, domain 2"/>
    <property type="match status" value="1"/>
</dbReference>
<dbReference type="Gene3D" id="3.90.170.10">
    <property type="entry name" value="Adenylosuccinate Synthetase, subunit A, domain 3"/>
    <property type="match status" value="1"/>
</dbReference>
<dbReference type="HAMAP" id="MF_00011">
    <property type="entry name" value="Adenylosucc_synth"/>
    <property type="match status" value="1"/>
</dbReference>
<dbReference type="InterPro" id="IPR018220">
    <property type="entry name" value="Adenylosuccin_syn_GTP-bd"/>
</dbReference>
<dbReference type="InterPro" id="IPR033128">
    <property type="entry name" value="Adenylosuccin_syn_Lys_AS"/>
</dbReference>
<dbReference type="InterPro" id="IPR042109">
    <property type="entry name" value="Adenylosuccinate_synth_dom1"/>
</dbReference>
<dbReference type="InterPro" id="IPR042110">
    <property type="entry name" value="Adenylosuccinate_synth_dom2"/>
</dbReference>
<dbReference type="InterPro" id="IPR042111">
    <property type="entry name" value="Adenylosuccinate_synth_dom3"/>
</dbReference>
<dbReference type="InterPro" id="IPR001114">
    <property type="entry name" value="Adenylosuccinate_synthetase"/>
</dbReference>
<dbReference type="InterPro" id="IPR027417">
    <property type="entry name" value="P-loop_NTPase"/>
</dbReference>
<dbReference type="NCBIfam" id="NF002223">
    <property type="entry name" value="PRK01117.1"/>
    <property type="match status" value="1"/>
</dbReference>
<dbReference type="NCBIfam" id="TIGR00184">
    <property type="entry name" value="purA"/>
    <property type="match status" value="1"/>
</dbReference>
<dbReference type="PANTHER" id="PTHR11846">
    <property type="entry name" value="ADENYLOSUCCINATE SYNTHETASE"/>
    <property type="match status" value="1"/>
</dbReference>
<dbReference type="PANTHER" id="PTHR11846:SF0">
    <property type="entry name" value="ADENYLOSUCCINATE SYNTHETASE"/>
    <property type="match status" value="1"/>
</dbReference>
<dbReference type="Pfam" id="PF00709">
    <property type="entry name" value="Adenylsucc_synt"/>
    <property type="match status" value="1"/>
</dbReference>
<dbReference type="SMART" id="SM00788">
    <property type="entry name" value="Adenylsucc_synt"/>
    <property type="match status" value="1"/>
</dbReference>
<dbReference type="SUPFAM" id="SSF52540">
    <property type="entry name" value="P-loop containing nucleoside triphosphate hydrolases"/>
    <property type="match status" value="1"/>
</dbReference>
<dbReference type="PROSITE" id="PS01266">
    <property type="entry name" value="ADENYLOSUCCIN_SYN_1"/>
    <property type="match status" value="1"/>
</dbReference>
<dbReference type="PROSITE" id="PS00513">
    <property type="entry name" value="ADENYLOSUCCIN_SYN_2"/>
    <property type="match status" value="1"/>
</dbReference>
<protein>
    <recommendedName>
        <fullName evidence="1">Adenylosuccinate synthetase</fullName>
        <shortName evidence="1">AMPSase</shortName>
        <shortName evidence="1">AdSS</shortName>
        <ecNumber evidence="1">6.3.4.4</ecNumber>
    </recommendedName>
    <alternativeName>
        <fullName evidence="1">IMP--aspartate ligase</fullName>
    </alternativeName>
</protein>
<evidence type="ECO:0000255" key="1">
    <source>
        <dbReference type="HAMAP-Rule" id="MF_00011"/>
    </source>
</evidence>
<organism>
    <name type="scientific">Psychrobacter sp. (strain PRwf-1)</name>
    <dbReference type="NCBI Taxonomy" id="349106"/>
    <lineage>
        <taxon>Bacteria</taxon>
        <taxon>Pseudomonadati</taxon>
        <taxon>Pseudomonadota</taxon>
        <taxon>Gammaproteobacteria</taxon>
        <taxon>Moraxellales</taxon>
        <taxon>Moraxellaceae</taxon>
        <taxon>Psychrobacter</taxon>
    </lineage>
</organism>
<reference key="1">
    <citation type="submission" date="2007-05" db="EMBL/GenBank/DDBJ databases">
        <title>Complete sequence of chromosome of Psychrobacter sp. PRwf-1.</title>
        <authorList>
            <consortium name="US DOE Joint Genome Institute"/>
            <person name="Copeland A."/>
            <person name="Lucas S."/>
            <person name="Lapidus A."/>
            <person name="Barry K."/>
            <person name="Detter J.C."/>
            <person name="Glavina del Rio T."/>
            <person name="Hammon N."/>
            <person name="Israni S."/>
            <person name="Dalin E."/>
            <person name="Tice H."/>
            <person name="Pitluck S."/>
            <person name="Chain P."/>
            <person name="Malfatti S."/>
            <person name="Shin M."/>
            <person name="Vergez L."/>
            <person name="Schmutz J."/>
            <person name="Larimer F."/>
            <person name="Land M."/>
            <person name="Hauser L."/>
            <person name="Kyrpides N."/>
            <person name="Kim E."/>
            <person name="Tiedje J."/>
            <person name="Richardson P."/>
        </authorList>
    </citation>
    <scope>NUCLEOTIDE SEQUENCE [LARGE SCALE GENOMIC DNA]</scope>
    <source>
        <strain>PRwf-1</strain>
    </source>
</reference>
<accession>A5WGF9</accession>
<sequence>MGKNVVVLGSQWGDEGKGKIVDLLTEKASAVARFQGGHNAGHTLVVDGKKTVLHLIPSGILRDDVTCFIGNGVVLSPEALLIEMKELEDNNVPVRERLKISPNCPLIMPYHIALDQAREAKRGSGKIGTTGRGIGPAYEDKVARRAIKLADLFRPDLEEKLRNLIEYHNFQLTQYYKVDAIDFDTTFALCQQWRDELKELVCDVTEALNQLRLAGKNLMFEGAQGTLLDIDHGTYPFVTSSSVTAGGVSTGTGIGPLYLDYVLGITKAYTTRVGSGPFPTELFDDVGAHLAKVGHEFGATTGRARRCGWFDAEALRRAVVLNSLSGICLTKLDVLDGLDEIRIGVGYDIPESEFAAAHDGEFYETVTPKYETLPGWKGSTVGITNYDDLPEEAKAYIKRIEQLIDCPVDIISTGPDRDETIVLRDPYDA</sequence>
<comment type="function">
    <text evidence="1">Plays an important role in the de novo pathway of purine nucleotide biosynthesis. Catalyzes the first committed step in the biosynthesis of AMP from IMP.</text>
</comment>
<comment type="catalytic activity">
    <reaction evidence="1">
        <text>IMP + L-aspartate + GTP = N(6)-(1,2-dicarboxyethyl)-AMP + GDP + phosphate + 2 H(+)</text>
        <dbReference type="Rhea" id="RHEA:15753"/>
        <dbReference type="ChEBI" id="CHEBI:15378"/>
        <dbReference type="ChEBI" id="CHEBI:29991"/>
        <dbReference type="ChEBI" id="CHEBI:37565"/>
        <dbReference type="ChEBI" id="CHEBI:43474"/>
        <dbReference type="ChEBI" id="CHEBI:57567"/>
        <dbReference type="ChEBI" id="CHEBI:58053"/>
        <dbReference type="ChEBI" id="CHEBI:58189"/>
        <dbReference type="EC" id="6.3.4.4"/>
    </reaction>
</comment>
<comment type="cofactor">
    <cofactor evidence="1">
        <name>Mg(2+)</name>
        <dbReference type="ChEBI" id="CHEBI:18420"/>
    </cofactor>
    <text evidence="1">Binds 1 Mg(2+) ion per subunit.</text>
</comment>
<comment type="pathway">
    <text evidence="1">Purine metabolism; AMP biosynthesis via de novo pathway; AMP from IMP: step 1/2.</text>
</comment>
<comment type="subunit">
    <text evidence="1">Homodimer.</text>
</comment>
<comment type="subcellular location">
    <subcellularLocation>
        <location evidence="1">Cytoplasm</location>
    </subcellularLocation>
</comment>
<comment type="similarity">
    <text evidence="1">Belongs to the adenylosuccinate synthetase family.</text>
</comment>
<proteinExistence type="inferred from homology"/>
<feature type="chain" id="PRO_1000070944" description="Adenylosuccinate synthetase">
    <location>
        <begin position="1"/>
        <end position="429"/>
    </location>
</feature>
<feature type="active site" description="Proton acceptor" evidence="1">
    <location>
        <position position="14"/>
    </location>
</feature>
<feature type="active site" description="Proton donor" evidence="1">
    <location>
        <position position="42"/>
    </location>
</feature>
<feature type="binding site" evidence="1">
    <location>
        <begin position="13"/>
        <end position="19"/>
    </location>
    <ligand>
        <name>GTP</name>
        <dbReference type="ChEBI" id="CHEBI:37565"/>
    </ligand>
</feature>
<feature type="binding site" description="in other chain" evidence="1">
    <location>
        <begin position="14"/>
        <end position="17"/>
    </location>
    <ligand>
        <name>IMP</name>
        <dbReference type="ChEBI" id="CHEBI:58053"/>
        <note>ligand shared between dimeric partners</note>
    </ligand>
</feature>
<feature type="binding site" evidence="1">
    <location>
        <position position="14"/>
    </location>
    <ligand>
        <name>Mg(2+)</name>
        <dbReference type="ChEBI" id="CHEBI:18420"/>
    </ligand>
</feature>
<feature type="binding site" description="in other chain" evidence="1">
    <location>
        <begin position="39"/>
        <end position="42"/>
    </location>
    <ligand>
        <name>IMP</name>
        <dbReference type="ChEBI" id="CHEBI:58053"/>
        <note>ligand shared between dimeric partners</note>
    </ligand>
</feature>
<feature type="binding site" evidence="1">
    <location>
        <begin position="41"/>
        <end position="43"/>
    </location>
    <ligand>
        <name>GTP</name>
        <dbReference type="ChEBI" id="CHEBI:37565"/>
    </ligand>
</feature>
<feature type="binding site" evidence="1">
    <location>
        <position position="41"/>
    </location>
    <ligand>
        <name>Mg(2+)</name>
        <dbReference type="ChEBI" id="CHEBI:18420"/>
    </ligand>
</feature>
<feature type="binding site" description="in other chain" evidence="1">
    <location>
        <position position="130"/>
    </location>
    <ligand>
        <name>IMP</name>
        <dbReference type="ChEBI" id="CHEBI:58053"/>
        <note>ligand shared between dimeric partners</note>
    </ligand>
</feature>
<feature type="binding site" evidence="1">
    <location>
        <position position="144"/>
    </location>
    <ligand>
        <name>IMP</name>
        <dbReference type="ChEBI" id="CHEBI:58053"/>
        <note>ligand shared between dimeric partners</note>
    </ligand>
</feature>
<feature type="binding site" description="in other chain" evidence="1">
    <location>
        <position position="224"/>
    </location>
    <ligand>
        <name>IMP</name>
        <dbReference type="ChEBI" id="CHEBI:58053"/>
        <note>ligand shared between dimeric partners</note>
    </ligand>
</feature>
<feature type="binding site" description="in other chain" evidence="1">
    <location>
        <position position="239"/>
    </location>
    <ligand>
        <name>IMP</name>
        <dbReference type="ChEBI" id="CHEBI:58053"/>
        <note>ligand shared between dimeric partners</note>
    </ligand>
</feature>
<feature type="binding site" evidence="1">
    <location>
        <begin position="299"/>
        <end position="305"/>
    </location>
    <ligand>
        <name>substrate</name>
    </ligand>
</feature>
<feature type="binding site" description="in other chain" evidence="1">
    <location>
        <position position="303"/>
    </location>
    <ligand>
        <name>IMP</name>
        <dbReference type="ChEBI" id="CHEBI:58053"/>
        <note>ligand shared between dimeric partners</note>
    </ligand>
</feature>
<feature type="binding site" evidence="1">
    <location>
        <position position="305"/>
    </location>
    <ligand>
        <name>GTP</name>
        <dbReference type="ChEBI" id="CHEBI:37565"/>
    </ligand>
</feature>
<feature type="binding site" evidence="1">
    <location>
        <begin position="331"/>
        <end position="333"/>
    </location>
    <ligand>
        <name>GTP</name>
        <dbReference type="ChEBI" id="CHEBI:37565"/>
    </ligand>
</feature>
<feature type="binding site" evidence="1">
    <location>
        <begin position="412"/>
        <end position="414"/>
    </location>
    <ligand>
        <name>GTP</name>
        <dbReference type="ChEBI" id="CHEBI:37565"/>
    </ligand>
</feature>
<name>PURA_PSYWF</name>
<keyword id="KW-0963">Cytoplasm</keyword>
<keyword id="KW-0342">GTP-binding</keyword>
<keyword id="KW-0436">Ligase</keyword>
<keyword id="KW-0460">Magnesium</keyword>
<keyword id="KW-0479">Metal-binding</keyword>
<keyword id="KW-0547">Nucleotide-binding</keyword>
<keyword id="KW-0658">Purine biosynthesis</keyword>